<evidence type="ECO:0000255" key="1"/>
<evidence type="ECO:0000305" key="2"/>
<protein>
    <recommendedName>
        <fullName>Uncharacterized 23.0 kDa protein in purT/mpa1 5'region</fullName>
    </recommendedName>
</protein>
<accession>P46928</accession>
<reference key="1">
    <citation type="journal article" date="1993" name="DNA Seq.">
        <title>Cloning, sequencing and expression of a Pasteurella haemolytica A1 gene encoding a PurK-like protein.</title>
        <authorList>
            <person name="Chang Y.F."/>
            <person name="Ma D.P."/>
            <person name="Young R."/>
            <person name="Struck D.K."/>
        </authorList>
    </citation>
    <scope>NUCLEOTIDE SEQUENCE [GENOMIC DNA]</scope>
    <source>
        <strain>Serotype A1</strain>
    </source>
</reference>
<organism>
    <name type="scientific">Mannheimia haemolytica</name>
    <name type="common">Pasteurella haemolytica</name>
    <dbReference type="NCBI Taxonomy" id="75985"/>
    <lineage>
        <taxon>Bacteria</taxon>
        <taxon>Pseudomonadati</taxon>
        <taxon>Pseudomonadota</taxon>
        <taxon>Gammaproteobacteria</taxon>
        <taxon>Pasteurellales</taxon>
        <taxon>Pasteurellaceae</taxon>
        <taxon>Mannheimia</taxon>
    </lineage>
</organism>
<comment type="subcellular location">
    <subcellularLocation>
        <location evidence="2">Cell membrane</location>
        <topology evidence="2">Multi-pass membrane protein</topology>
    </subcellularLocation>
</comment>
<comment type="similarity">
    <text evidence="2">To E.coli YkgB.</text>
</comment>
<comment type="similarity">
    <text evidence="2">To H.influenzae HI_0219.</text>
</comment>
<feature type="chain" id="PRO_0000168568" description="Uncharacterized 23.0 kDa protein in purT/mpa1 5'region">
    <location>
        <begin position="1"/>
        <end position="211"/>
    </location>
</feature>
<feature type="transmembrane region" description="Helical" evidence="1">
    <location>
        <begin position="22"/>
        <end position="42"/>
    </location>
</feature>
<feature type="transmembrane region" description="Helical" evidence="1">
    <location>
        <begin position="111"/>
        <end position="131"/>
    </location>
</feature>
<feature type="transmembrane region" description="Helical" evidence="1">
    <location>
        <begin position="133"/>
        <end position="153"/>
    </location>
</feature>
<sequence>MSAFNNFVNFVANIVAPMQRQFINFVRIAICIVMVWIGGLKVCQYEADGIAHFVSNSPFFSYMYKKGPNLVDDGTGKMVMEYTLHKNPEGKMVAKNIEWHKENGTYTASYIIGATIVTVGLLTLSGIWFPVSGMAGGLLTFGMSIVTLSFMITTPEIWVPNLGGDMPTPAHGFPYLSAVGRLIVKDVIMMAGGLVAAAECANRILARRKAI</sequence>
<keyword id="KW-1003">Cell membrane</keyword>
<keyword id="KW-0472">Membrane</keyword>
<keyword id="KW-0812">Transmembrane</keyword>
<keyword id="KW-1133">Transmembrane helix</keyword>
<dbReference type="EMBL" id="S68137">
    <property type="protein sequence ID" value="AAB28916.1"/>
    <property type="molecule type" value="Genomic_DNA"/>
</dbReference>
<dbReference type="PIR" id="B56691">
    <property type="entry name" value="B56691"/>
</dbReference>
<dbReference type="SMR" id="P46928"/>
<dbReference type="STRING" id="75985.WC39_09910"/>
<dbReference type="GO" id="GO:0005886">
    <property type="term" value="C:plasma membrane"/>
    <property type="evidence" value="ECO:0007669"/>
    <property type="project" value="UniProtKB-SubCell"/>
</dbReference>
<dbReference type="GO" id="GO:1901530">
    <property type="term" value="P:response to hypochlorite"/>
    <property type="evidence" value="ECO:0007669"/>
    <property type="project" value="TreeGrafter"/>
</dbReference>
<dbReference type="InterPro" id="IPR007339">
    <property type="entry name" value="RclC-like"/>
</dbReference>
<dbReference type="PANTHER" id="PTHR40106">
    <property type="entry name" value="INNER MEMBRANE PROTEIN RCLC"/>
    <property type="match status" value="1"/>
</dbReference>
<dbReference type="PANTHER" id="PTHR40106:SF1">
    <property type="entry name" value="INNER MEMBRANE PROTEIN RCLC"/>
    <property type="match status" value="1"/>
</dbReference>
<dbReference type="Pfam" id="PF04224">
    <property type="entry name" value="DUF417"/>
    <property type="match status" value="1"/>
</dbReference>
<proteinExistence type="predicted"/>
<name>YKGB_MANHA</name>